<protein>
    <recommendedName>
        <fullName>Ribonuclease TTHA0252</fullName>
        <ecNumber>3.1.-.-</ecNumber>
    </recommendedName>
</protein>
<keyword id="KW-0002">3D-structure</keyword>
<keyword id="KW-0963">Cytoplasm</keyword>
<keyword id="KW-0255">Endonuclease</keyword>
<keyword id="KW-0378">Hydrolase</keyword>
<keyword id="KW-0479">Metal-binding</keyword>
<keyword id="KW-0540">Nuclease</keyword>
<keyword id="KW-1185">Reference proteome</keyword>
<keyword id="KW-0694">RNA-binding</keyword>
<keyword id="KW-0698">rRNA processing</keyword>
<keyword id="KW-0862">Zinc</keyword>
<proteinExistence type="evidence at protein level"/>
<name>RNSE_THET8</name>
<gene>
    <name type="ordered locus">TTHA0252</name>
</gene>
<comment type="function">
    <text evidence="2">Has endoribonuclease activity towards 23S and 16S rRNA (in vitro).</text>
</comment>
<comment type="cofactor">
    <cofactor evidence="2">
        <name>Zn(2+)</name>
        <dbReference type="ChEBI" id="CHEBI:29105"/>
    </cofactor>
    <text evidence="2">Binds 2 Zn(2+) ions.</text>
</comment>
<comment type="activity regulation">
    <text evidence="2">Inhibited by cadmium, cobalt, manganese, magnesium, calcium and nickel ions.</text>
</comment>
<comment type="subunit">
    <text evidence="2">Monomer.</text>
</comment>
<comment type="subcellular location">
    <subcellularLocation>
        <location evidence="1">Cytoplasm</location>
    </subcellularLocation>
</comment>
<comment type="similarity">
    <text evidence="3">Belongs to the metallo-beta-lactamase superfamily. RNA-metabolizing metallo-beta-lactamase-like family.</text>
</comment>
<accession>Q5SLP1</accession>
<sequence length="431" mass="47055">MRIVPFGAAREVTGSAHLLLAGGRRVLLDCGMFQGKEEARNHAPFGFDPKEVDAVLLTHAHLDHVGRLPKLFREGYRGPVYATRATVLLMEIVLEDALKVMDEPFFGPEDVEEALGHLRPLEYGEWLRLGALSLAFGQAGHLPGSAFVVAQGEGRTLVYSGDLGNREKDVLPDPSLPPLADLVLAEGTYGDRPHRPYRETVREFLEILEKTLSQGGKVLIPTFAVERAQEILYVLYTHGHRLPRAPIYLDSPMAGRVLSLYPRLVRYFSEEVQAHFLQGKNPFRPAGLEVVEHTEASKALNRAPGPMVVLAGSGMLAGGRILHHLKHGLSDPRNALVFVGYQPQGGLGAEIIARPPAVRILGEEVPLRASVHTLGGFSGHAGQDELLDWLQGEPRVVLVHGEEEKLLALGKLLALRGQEVSLARFGEGVPV</sequence>
<feature type="chain" id="PRO_0000319322" description="Ribonuclease TTHA0252">
    <location>
        <begin position="1"/>
        <end position="431"/>
    </location>
</feature>
<feature type="binding site">
    <location>
        <position position="59"/>
    </location>
    <ligand>
        <name>Zn(2+)</name>
        <dbReference type="ChEBI" id="CHEBI:29105"/>
        <label>1</label>
    </ligand>
</feature>
<feature type="binding site">
    <location>
        <position position="61"/>
    </location>
    <ligand>
        <name>Zn(2+)</name>
        <dbReference type="ChEBI" id="CHEBI:29105"/>
        <label>1</label>
    </ligand>
</feature>
<feature type="binding site">
    <location>
        <position position="63"/>
    </location>
    <ligand>
        <name>Zn(2+)</name>
        <dbReference type="ChEBI" id="CHEBI:29105"/>
        <label>2</label>
    </ligand>
</feature>
<feature type="binding site">
    <location>
        <position position="64"/>
    </location>
    <ligand>
        <name>Zn(2+)</name>
        <dbReference type="ChEBI" id="CHEBI:29105"/>
        <label>2</label>
    </ligand>
</feature>
<feature type="binding site">
    <location>
        <position position="141"/>
    </location>
    <ligand>
        <name>Zn(2+)</name>
        <dbReference type="ChEBI" id="CHEBI:29105"/>
        <label>1</label>
    </ligand>
</feature>
<feature type="binding site">
    <location>
        <position position="162"/>
    </location>
    <ligand>
        <name>Zn(2+)</name>
        <dbReference type="ChEBI" id="CHEBI:29105"/>
        <label>1</label>
    </ligand>
</feature>
<feature type="binding site">
    <location>
        <position position="162"/>
    </location>
    <ligand>
        <name>Zn(2+)</name>
        <dbReference type="ChEBI" id="CHEBI:29105"/>
        <label>2</label>
    </ligand>
</feature>
<feature type="binding site">
    <location>
        <position position="400"/>
    </location>
    <ligand>
        <name>Zn(2+)</name>
        <dbReference type="ChEBI" id="CHEBI:29105"/>
        <label>2</label>
    </ligand>
</feature>
<feature type="strand" evidence="4">
    <location>
        <begin position="2"/>
        <end position="5"/>
    </location>
</feature>
<feature type="strand" evidence="4">
    <location>
        <begin position="9"/>
        <end position="13"/>
    </location>
</feature>
<feature type="strand" evidence="4">
    <location>
        <begin position="17"/>
        <end position="21"/>
    </location>
</feature>
<feature type="strand" evidence="4">
    <location>
        <begin position="24"/>
        <end position="28"/>
    </location>
</feature>
<feature type="helix" evidence="4">
    <location>
        <begin position="35"/>
        <end position="42"/>
    </location>
</feature>
<feature type="helix" evidence="4">
    <location>
        <begin position="49"/>
        <end position="51"/>
    </location>
</feature>
<feature type="strand" evidence="4">
    <location>
        <begin position="54"/>
        <end position="56"/>
    </location>
</feature>
<feature type="helix" evidence="4">
    <location>
        <begin position="62"/>
        <end position="65"/>
    </location>
</feature>
<feature type="helix" evidence="4">
    <location>
        <begin position="68"/>
        <end position="73"/>
    </location>
</feature>
<feature type="strand" evidence="4">
    <location>
        <begin position="80"/>
        <end position="82"/>
    </location>
</feature>
<feature type="helix" evidence="4">
    <location>
        <begin position="84"/>
        <end position="100"/>
    </location>
</feature>
<feature type="helix" evidence="4">
    <location>
        <begin position="108"/>
        <end position="116"/>
    </location>
</feature>
<feature type="strand" evidence="4">
    <location>
        <begin position="118"/>
        <end position="120"/>
    </location>
</feature>
<feature type="strand" evidence="4">
    <location>
        <begin position="127"/>
        <end position="129"/>
    </location>
</feature>
<feature type="strand" evidence="4">
    <location>
        <begin position="132"/>
        <end position="138"/>
    </location>
</feature>
<feature type="strand" evidence="4">
    <location>
        <begin position="146"/>
        <end position="152"/>
    </location>
</feature>
<feature type="strand" evidence="4">
    <location>
        <begin position="155"/>
        <end position="159"/>
    </location>
</feature>
<feature type="strand" evidence="4">
    <location>
        <begin position="168"/>
        <end position="171"/>
    </location>
</feature>
<feature type="strand" evidence="4">
    <location>
        <begin position="181"/>
        <end position="186"/>
    </location>
</feature>
<feature type="turn" evidence="4">
    <location>
        <begin position="188"/>
        <end position="191"/>
    </location>
</feature>
<feature type="helix" evidence="4">
    <location>
        <begin position="197"/>
        <end position="213"/>
    </location>
</feature>
<feature type="strand" evidence="4">
    <location>
        <begin position="217"/>
        <end position="221"/>
    </location>
</feature>
<feature type="turn" evidence="4">
    <location>
        <begin position="224"/>
        <end position="226"/>
    </location>
</feature>
<feature type="helix" evidence="4">
    <location>
        <begin position="227"/>
        <end position="238"/>
    </location>
</feature>
<feature type="helix" evidence="4">
    <location>
        <begin position="239"/>
        <end position="241"/>
    </location>
</feature>
<feature type="strand" evidence="4">
    <location>
        <begin position="247"/>
        <end position="250"/>
    </location>
</feature>
<feature type="helix" evidence="4">
    <location>
        <begin position="252"/>
        <end position="260"/>
    </location>
</feature>
<feature type="helix" evidence="4">
    <location>
        <begin position="261"/>
        <end position="267"/>
    </location>
</feature>
<feature type="helix" evidence="4">
    <location>
        <begin position="270"/>
        <end position="277"/>
    </location>
</feature>
<feature type="strand" evidence="4">
    <location>
        <begin position="288"/>
        <end position="290"/>
    </location>
</feature>
<feature type="helix" evidence="4">
    <location>
        <begin position="294"/>
        <end position="302"/>
    </location>
</feature>
<feature type="strand" evidence="4">
    <location>
        <begin position="305"/>
        <end position="312"/>
    </location>
</feature>
<feature type="strand" evidence="4">
    <location>
        <begin position="316"/>
        <end position="319"/>
    </location>
</feature>
<feature type="helix" evidence="4">
    <location>
        <begin position="320"/>
        <end position="328"/>
    </location>
</feature>
<feature type="strand" evidence="4">
    <location>
        <begin position="335"/>
        <end position="338"/>
    </location>
</feature>
<feature type="helix" evidence="4">
    <location>
        <begin position="347"/>
        <end position="352"/>
    </location>
</feature>
<feature type="strand" evidence="4">
    <location>
        <begin position="356"/>
        <end position="360"/>
    </location>
</feature>
<feature type="strand" evidence="4">
    <location>
        <begin position="363"/>
        <end position="366"/>
    </location>
</feature>
<feature type="strand" evidence="4">
    <location>
        <begin position="369"/>
        <end position="373"/>
    </location>
</feature>
<feature type="helix" evidence="4">
    <location>
        <begin position="375"/>
        <end position="377"/>
    </location>
</feature>
<feature type="helix" evidence="4">
    <location>
        <begin position="383"/>
        <end position="390"/>
    </location>
</feature>
<feature type="strand" evidence="4">
    <location>
        <begin position="394"/>
        <end position="401"/>
    </location>
</feature>
<feature type="helix" evidence="4">
    <location>
        <begin position="403"/>
        <end position="415"/>
    </location>
</feature>
<feature type="strand" evidence="4">
    <location>
        <begin position="419"/>
        <end position="422"/>
    </location>
</feature>
<organism>
    <name type="scientific">Thermus thermophilus (strain ATCC 27634 / DSM 579 / HB8)</name>
    <dbReference type="NCBI Taxonomy" id="300852"/>
    <lineage>
        <taxon>Bacteria</taxon>
        <taxon>Thermotogati</taxon>
        <taxon>Deinococcota</taxon>
        <taxon>Deinococci</taxon>
        <taxon>Thermales</taxon>
        <taxon>Thermaceae</taxon>
        <taxon>Thermus</taxon>
    </lineage>
</organism>
<evidence type="ECO:0000250" key="1"/>
<evidence type="ECO:0000269" key="2">
    <source>
    </source>
</evidence>
<evidence type="ECO:0000305" key="3"/>
<evidence type="ECO:0007829" key="4">
    <source>
        <dbReference type="PDB" id="3IEK"/>
    </source>
</evidence>
<reference key="1">
    <citation type="submission" date="2004-11" db="EMBL/GenBank/DDBJ databases">
        <title>Complete genome sequence of Thermus thermophilus HB8.</title>
        <authorList>
            <person name="Masui R."/>
            <person name="Kurokawa K."/>
            <person name="Nakagawa N."/>
            <person name="Tokunaga F."/>
            <person name="Koyama Y."/>
            <person name="Shibata T."/>
            <person name="Oshima T."/>
            <person name="Yokoyama S."/>
            <person name="Yasunaga T."/>
            <person name="Kuramitsu S."/>
        </authorList>
    </citation>
    <scope>NUCLEOTIDE SEQUENCE [LARGE SCALE GENOMIC DNA]</scope>
    <source>
        <strain>ATCC 27634 / DSM 579 / HB8</strain>
    </source>
</reference>
<reference key="2">
    <citation type="journal article" date="2006" name="J. Biochem.">
        <title>Crystal structure of TTHA0252 from Thermus thermophilus HB8, a RNA degradation protein of the metallo-beta-lactamase superfamily.</title>
        <authorList>
            <person name="Ishikawa H."/>
            <person name="Nakagawa N."/>
            <person name="Kuramitsu S."/>
            <person name="Masui R."/>
        </authorList>
    </citation>
    <scope>X-RAY CRYSTALLOGRAPHY (2.8 ANGSTROMS)</scope>
    <scope>FUNCTION</scope>
    <scope>COFACTOR</scope>
    <scope>ACTIVITY REGULATION</scope>
    <scope>SUBUNIT</scope>
</reference>
<dbReference type="EC" id="3.1.-.-"/>
<dbReference type="EMBL" id="AP008226">
    <property type="protein sequence ID" value="BAD70075.1"/>
    <property type="molecule type" value="Genomic_DNA"/>
</dbReference>
<dbReference type="RefSeq" id="WP_011227806.1">
    <property type="nucleotide sequence ID" value="NC_006461.1"/>
</dbReference>
<dbReference type="RefSeq" id="YP_143518.1">
    <property type="nucleotide sequence ID" value="NC_006461.1"/>
</dbReference>
<dbReference type="PDB" id="2DKF">
    <property type="method" value="X-ray"/>
    <property type="resolution" value="2.80 A"/>
    <property type="chains" value="A/B/C/D=1-431"/>
</dbReference>
<dbReference type="PDB" id="3A4Y">
    <property type="method" value="X-ray"/>
    <property type="resolution" value="2.50 A"/>
    <property type="chains" value="A/B/C/D=1-431"/>
</dbReference>
<dbReference type="PDB" id="3IDZ">
    <property type="method" value="X-ray"/>
    <property type="resolution" value="2.50 A"/>
    <property type="chains" value="A/B/C/D=1-431"/>
</dbReference>
<dbReference type="PDB" id="3IE0">
    <property type="method" value="X-ray"/>
    <property type="resolution" value="2.73 A"/>
    <property type="chains" value="A/B/C/D=1-431"/>
</dbReference>
<dbReference type="PDB" id="3IE1">
    <property type="method" value="X-ray"/>
    <property type="resolution" value="2.85 A"/>
    <property type="chains" value="A/B/C/D=1-431"/>
</dbReference>
<dbReference type="PDB" id="3IE2">
    <property type="method" value="X-ray"/>
    <property type="resolution" value="2.80 A"/>
    <property type="chains" value="A/B/C/D=1-431"/>
</dbReference>
<dbReference type="PDB" id="3IEK">
    <property type="method" value="X-ray"/>
    <property type="resolution" value="2.05 A"/>
    <property type="chains" value="A/B/C/D=1-431"/>
</dbReference>
<dbReference type="PDB" id="3IEL">
    <property type="method" value="X-ray"/>
    <property type="resolution" value="2.35 A"/>
    <property type="chains" value="A/B/C/D=1-431"/>
</dbReference>
<dbReference type="PDB" id="3IEM">
    <property type="method" value="X-ray"/>
    <property type="resolution" value="2.50 A"/>
    <property type="chains" value="A/B/C/D=1-431"/>
</dbReference>
<dbReference type="PDBsum" id="2DKF"/>
<dbReference type="PDBsum" id="3A4Y"/>
<dbReference type="PDBsum" id="3IDZ"/>
<dbReference type="PDBsum" id="3IE0"/>
<dbReference type="PDBsum" id="3IE1"/>
<dbReference type="PDBsum" id="3IE2"/>
<dbReference type="PDBsum" id="3IEK"/>
<dbReference type="PDBsum" id="3IEL"/>
<dbReference type="PDBsum" id="3IEM"/>
<dbReference type="SMR" id="Q5SLP1"/>
<dbReference type="EnsemblBacteria" id="BAD70075">
    <property type="protein sequence ID" value="BAD70075"/>
    <property type="gene ID" value="BAD70075"/>
</dbReference>
<dbReference type="GeneID" id="3170139"/>
<dbReference type="KEGG" id="ttj:TTHA0252"/>
<dbReference type="PATRIC" id="fig|300852.9.peg.252"/>
<dbReference type="eggNOG" id="COG1236">
    <property type="taxonomic scope" value="Bacteria"/>
</dbReference>
<dbReference type="HOGENOM" id="CLU_009673_5_0_0"/>
<dbReference type="PhylomeDB" id="Q5SLP1"/>
<dbReference type="EvolutionaryTrace" id="Q5SLP1"/>
<dbReference type="Proteomes" id="UP000000532">
    <property type="component" value="Chromosome"/>
</dbReference>
<dbReference type="GO" id="GO:0005737">
    <property type="term" value="C:cytoplasm"/>
    <property type="evidence" value="ECO:0007669"/>
    <property type="project" value="UniProtKB-SubCell"/>
</dbReference>
<dbReference type="GO" id="GO:0046872">
    <property type="term" value="F:metal ion binding"/>
    <property type="evidence" value="ECO:0007669"/>
    <property type="project" value="UniProtKB-KW"/>
</dbReference>
<dbReference type="GO" id="GO:0003723">
    <property type="term" value="F:RNA binding"/>
    <property type="evidence" value="ECO:0007669"/>
    <property type="project" value="UniProtKB-KW"/>
</dbReference>
<dbReference type="GO" id="GO:0004521">
    <property type="term" value="F:RNA endonuclease activity"/>
    <property type="evidence" value="ECO:0007669"/>
    <property type="project" value="TreeGrafter"/>
</dbReference>
<dbReference type="GO" id="GO:0006364">
    <property type="term" value="P:rRNA processing"/>
    <property type="evidence" value="ECO:0007669"/>
    <property type="project" value="UniProtKB-KW"/>
</dbReference>
<dbReference type="CDD" id="cd16295">
    <property type="entry name" value="TTHA0252-CPSF-like_MBL-fold"/>
    <property type="match status" value="1"/>
</dbReference>
<dbReference type="Gene3D" id="3.40.50.10890">
    <property type="match status" value="1"/>
</dbReference>
<dbReference type="Gene3D" id="3.60.15.10">
    <property type="entry name" value="Ribonuclease Z/Hydroxyacylglutathione hydrolase-like"/>
    <property type="match status" value="1"/>
</dbReference>
<dbReference type="InterPro" id="IPR022712">
    <property type="entry name" value="Beta_Casp"/>
</dbReference>
<dbReference type="InterPro" id="IPR050698">
    <property type="entry name" value="MBL"/>
</dbReference>
<dbReference type="InterPro" id="IPR001279">
    <property type="entry name" value="Metallo-B-lactamas"/>
</dbReference>
<dbReference type="InterPro" id="IPR036866">
    <property type="entry name" value="RibonucZ/Hydroxyglut_hydro"/>
</dbReference>
<dbReference type="InterPro" id="IPR011108">
    <property type="entry name" value="RMMBL"/>
</dbReference>
<dbReference type="PANTHER" id="PTHR11203">
    <property type="entry name" value="CLEAVAGE AND POLYADENYLATION SPECIFICITY FACTOR FAMILY MEMBER"/>
    <property type="match status" value="1"/>
</dbReference>
<dbReference type="PANTHER" id="PTHR11203:SF37">
    <property type="entry name" value="INTEGRATOR COMPLEX SUBUNIT 11"/>
    <property type="match status" value="1"/>
</dbReference>
<dbReference type="Pfam" id="PF10996">
    <property type="entry name" value="Beta-Casp"/>
    <property type="match status" value="1"/>
</dbReference>
<dbReference type="Pfam" id="PF00753">
    <property type="entry name" value="Lactamase_B"/>
    <property type="match status" value="1"/>
</dbReference>
<dbReference type="Pfam" id="PF07521">
    <property type="entry name" value="RMMBL"/>
    <property type="match status" value="1"/>
</dbReference>
<dbReference type="SMART" id="SM01027">
    <property type="entry name" value="Beta-Casp"/>
    <property type="match status" value="1"/>
</dbReference>
<dbReference type="SMART" id="SM00849">
    <property type="entry name" value="Lactamase_B"/>
    <property type="match status" value="1"/>
</dbReference>
<dbReference type="SUPFAM" id="SSF56281">
    <property type="entry name" value="Metallo-hydrolase/oxidoreductase"/>
    <property type="match status" value="1"/>
</dbReference>